<sequence length="280" mass="32033">MHLPREAFLLALAGAFIFPSSQQEKRTQRDLRVVCFYQKDFRNGTKAEQWGKKTPTQIWRGCMSVCNAIVVCLFELGVSETWNSKSCKCDCEGGESPTEFPSIRTGSSMVRGVDCMPECPYHRPLGFEAGSISPDQITCSNQDQYTAWFSSWLPSKARLNTQGFGCAWLSKFQDNTQWLQIDLIDAKVVSGILTQGRCDADEWITKYSLQYRTDEKLNWIYYKDQTGNNRVFYGNSDRSSSVQNLLRPPIVARYIRILPLGWHTRIALRLELLLCMNKCS</sequence>
<dbReference type="EMBL" id="AF146687">
    <property type="protein sequence ID" value="AAD28797.1"/>
    <property type="molecule type" value="Genomic_DNA"/>
</dbReference>
<dbReference type="SMR" id="Q9W6R5"/>
<dbReference type="FunCoup" id="Q9W6R5">
    <property type="interactions" value="455"/>
</dbReference>
<dbReference type="STRING" id="31033.ENSTRUP00000031905"/>
<dbReference type="eggNOG" id="ENOG502QU6Y">
    <property type="taxonomic scope" value="Eukaryota"/>
</dbReference>
<dbReference type="InParanoid" id="Q9W6R5"/>
<dbReference type="TreeFam" id="TF352191"/>
<dbReference type="Proteomes" id="UP000005226">
    <property type="component" value="Unplaced"/>
</dbReference>
<dbReference type="GO" id="GO:0005576">
    <property type="term" value="C:extracellular region"/>
    <property type="evidence" value="ECO:0007669"/>
    <property type="project" value="UniProtKB-SubCell"/>
</dbReference>
<dbReference type="GO" id="GO:0005886">
    <property type="term" value="C:plasma membrane"/>
    <property type="evidence" value="ECO:0007669"/>
    <property type="project" value="UniProtKB-SubCell"/>
</dbReference>
<dbReference type="GO" id="GO:0008289">
    <property type="term" value="F:lipid binding"/>
    <property type="evidence" value="ECO:0007669"/>
    <property type="project" value="UniProtKB-KW"/>
</dbReference>
<dbReference type="GO" id="GO:0038023">
    <property type="term" value="F:signaling receptor activity"/>
    <property type="evidence" value="ECO:0007669"/>
    <property type="project" value="TreeGrafter"/>
</dbReference>
<dbReference type="GO" id="GO:0007155">
    <property type="term" value="P:cell adhesion"/>
    <property type="evidence" value="ECO:0007669"/>
    <property type="project" value="UniProtKB-KW"/>
</dbReference>
<dbReference type="GO" id="GO:0007601">
    <property type="term" value="P:visual perception"/>
    <property type="evidence" value="ECO:0007669"/>
    <property type="project" value="UniProtKB-KW"/>
</dbReference>
<dbReference type="CDD" id="cd00057">
    <property type="entry name" value="FA58C"/>
    <property type="match status" value="1"/>
</dbReference>
<dbReference type="FunFam" id="2.60.120.260:FF:000002">
    <property type="entry name" value="Coagulation factor VIII"/>
    <property type="match status" value="1"/>
</dbReference>
<dbReference type="Gene3D" id="2.60.120.260">
    <property type="entry name" value="Galactose-binding domain-like"/>
    <property type="match status" value="1"/>
</dbReference>
<dbReference type="InterPro" id="IPR000421">
    <property type="entry name" value="FA58C"/>
</dbReference>
<dbReference type="InterPro" id="IPR008979">
    <property type="entry name" value="Galactose-bd-like_sf"/>
</dbReference>
<dbReference type="InterPro" id="IPR050633">
    <property type="entry name" value="Neuropilin_MCO_CoagFactor"/>
</dbReference>
<dbReference type="PANTHER" id="PTHR46806">
    <property type="entry name" value="F5/8 TYPE C DOMAIN-CONTAINING PROTEIN"/>
    <property type="match status" value="1"/>
</dbReference>
<dbReference type="PANTHER" id="PTHR46806:SF5">
    <property type="entry name" value="F5_8 TYPE C DOMAIN-CONTAINING PROTEIN"/>
    <property type="match status" value="1"/>
</dbReference>
<dbReference type="Pfam" id="PF00754">
    <property type="entry name" value="F5_F8_type_C"/>
    <property type="match status" value="1"/>
</dbReference>
<dbReference type="SMART" id="SM00231">
    <property type="entry name" value="FA58C"/>
    <property type="match status" value="1"/>
</dbReference>
<dbReference type="SUPFAM" id="SSF49785">
    <property type="entry name" value="Galactose-binding domain-like"/>
    <property type="match status" value="1"/>
</dbReference>
<dbReference type="PROSITE" id="PS01285">
    <property type="entry name" value="FA58C_1"/>
    <property type="match status" value="1"/>
</dbReference>
<dbReference type="PROSITE" id="PS50022">
    <property type="entry name" value="FA58C_3"/>
    <property type="match status" value="1"/>
</dbReference>
<reference key="1">
    <citation type="journal article" date="1999" name="Genome Res.">
        <title>Genomic structure and comparative analysis of nine Fugu genes: conservation of synteny with human chromosome Xp22.2-p22.1.</title>
        <authorList>
            <person name="Brunner B."/>
            <person name="Todt T."/>
            <person name="Lenzner S."/>
            <person name="Stout K."/>
            <person name="Schulz U."/>
            <person name="Ropers H.-H."/>
            <person name="Kalscheuer V.M."/>
        </authorList>
    </citation>
    <scope>NUCLEOTIDE SEQUENCE [GENOMIC DNA]</scope>
</reference>
<evidence type="ECO:0000250" key="1">
    <source>
        <dbReference type="UniProtKB" id="O15537"/>
    </source>
</evidence>
<evidence type="ECO:0000250" key="2">
    <source>
        <dbReference type="UniProtKB" id="Q9Z1L4"/>
    </source>
</evidence>
<evidence type="ECO:0000255" key="3"/>
<evidence type="ECO:0000255" key="4">
    <source>
        <dbReference type="PROSITE-ProRule" id="PRU00081"/>
    </source>
</evidence>
<proteinExistence type="inferred from homology"/>
<gene>
    <name type="primary">xlrs1</name>
</gene>
<protein>
    <recommendedName>
        <fullName>Retinoschisin</fullName>
    </recommendedName>
    <alternativeName>
        <fullName>X-linked juvenile retinoschisis protein homolog</fullName>
    </alternativeName>
</protein>
<keyword id="KW-0130">Cell adhesion</keyword>
<keyword id="KW-1003">Cell membrane</keyword>
<keyword id="KW-1015">Disulfide bond</keyword>
<keyword id="KW-0446">Lipid-binding</keyword>
<keyword id="KW-0472">Membrane</keyword>
<keyword id="KW-1185">Reference proteome</keyword>
<keyword id="KW-0964">Secreted</keyword>
<keyword id="KW-0716">Sensory transduction</keyword>
<keyword id="KW-0732">Signal</keyword>
<keyword id="KW-0844">Vision</keyword>
<feature type="signal peptide" evidence="3">
    <location>
        <begin position="1"/>
        <end position="23"/>
    </location>
</feature>
<feature type="chain" id="PRO_0000022694" description="Retinoschisin">
    <location>
        <begin position="24"/>
        <end position="280"/>
    </location>
</feature>
<feature type="domain" description="F5/8 type C" evidence="4">
    <location>
        <begin position="119"/>
        <end position="275"/>
    </location>
</feature>
<feature type="disulfide bond" description="Interchain" evidence="4">
    <location>
        <position position="89"/>
    </location>
</feature>
<feature type="disulfide bond" description="Interchain (with C-279)" evidence="4">
    <location>
        <position position="115"/>
    </location>
</feature>
<feature type="disulfide bond" evidence="4">
    <location>
        <begin position="119"/>
        <end position="275"/>
    </location>
</feature>
<feature type="disulfide bond" evidence="4">
    <location>
        <begin position="166"/>
        <end position="198"/>
    </location>
</feature>
<feature type="disulfide bond" description="Interchain (with C-115)" evidence="4">
    <location>
        <position position="279"/>
    </location>
</feature>
<comment type="function">
    <text evidence="1 2">Binds negatively charged membrane lipids, such as phosphatidylserine and phosphoinositides. May play a role in cell-cell adhesion processes in the retina, via homomeric interaction between octamers present on the surface of two neighboring cells. Required for normal structure and function of the retina (By similarity).</text>
</comment>
<comment type="subunit">
    <text evidence="1">Homooctamer of 4 homodimers; disulfide-linked. The homooctamer has a flat, cogwheel structure with a diameter of about 14 nm. Two stacked octamers can assemble to form a hexadecamer.</text>
</comment>
<comment type="subcellular location">
    <subcellularLocation>
        <location evidence="1">Secreted</location>
    </subcellularLocation>
    <subcellularLocation>
        <location evidence="2">Cell membrane</location>
        <topology evidence="2">Peripheral membrane protein</topology>
        <orientation evidence="2">Extracellular side</orientation>
    </subcellularLocation>
    <text evidence="2">Binds to phosphatidylserine-containing lipid membranes and embeds itself partially into the lipid bilayer. Lipid-binding requires the presence of Ca(2+) ions.</text>
</comment>
<organism>
    <name type="scientific">Takifugu rubripes</name>
    <name type="common">Japanese pufferfish</name>
    <name type="synonym">Fugu rubripes</name>
    <dbReference type="NCBI Taxonomy" id="31033"/>
    <lineage>
        <taxon>Eukaryota</taxon>
        <taxon>Metazoa</taxon>
        <taxon>Chordata</taxon>
        <taxon>Craniata</taxon>
        <taxon>Vertebrata</taxon>
        <taxon>Euteleostomi</taxon>
        <taxon>Actinopterygii</taxon>
        <taxon>Neopterygii</taxon>
        <taxon>Teleostei</taxon>
        <taxon>Neoteleostei</taxon>
        <taxon>Acanthomorphata</taxon>
        <taxon>Eupercaria</taxon>
        <taxon>Tetraodontiformes</taxon>
        <taxon>Tetradontoidea</taxon>
        <taxon>Tetraodontidae</taxon>
        <taxon>Takifugu</taxon>
    </lineage>
</organism>
<name>XLRS1_TAKRU</name>
<accession>Q9W6R5</accession>